<dbReference type="EMBL" id="DQ115393">
    <property type="protein sequence ID" value="AAZ22510.1"/>
    <property type="molecule type" value="Genomic_DNA"/>
</dbReference>
<dbReference type="EMBL" id="Z50161">
    <property type="status" value="NOT_ANNOTATED_CDS"/>
    <property type="molecule type" value="Genomic_DNA"/>
</dbReference>
<dbReference type="EMBL" id="Z71373">
    <property type="status" value="NOT_ANNOTATED_CDS"/>
    <property type="molecule type" value="Genomic_DNA"/>
</dbReference>
<dbReference type="EMBL" id="Z71374">
    <property type="status" value="NOT_ANNOTATED_CDS"/>
    <property type="molecule type" value="Genomic_DNA"/>
</dbReference>
<dbReference type="EMBL" id="AF479912">
    <property type="protein sequence ID" value="AAL79225.1"/>
    <property type="molecule type" value="Genomic_DNA"/>
</dbReference>
<dbReference type="EMBL" id="BK006947">
    <property type="protein sequence ID" value="DAA10448.1"/>
    <property type="molecule type" value="Genomic_DNA"/>
</dbReference>
<dbReference type="RefSeq" id="NP_878155.1">
    <property type="nucleotide sequence ID" value="NM_001184620.1"/>
</dbReference>
<dbReference type="BioGRID" id="37055">
    <property type="interactions" value="29"/>
</dbReference>
<dbReference type="FunCoup" id="P0C271">
    <property type="interactions" value="13"/>
</dbReference>
<dbReference type="STRING" id="4932.YNL097C-B"/>
<dbReference type="PaxDb" id="4932-YNL097C-B"/>
<dbReference type="EnsemblFungi" id="YNL097C-B_mRNA">
    <property type="protein sequence ID" value="YNL097C-B"/>
    <property type="gene ID" value="YNL097C-B"/>
</dbReference>
<dbReference type="GeneID" id="1466513"/>
<dbReference type="KEGG" id="sce:YNL097C-B"/>
<dbReference type="AGR" id="SGD:S000028699"/>
<dbReference type="SGD" id="S000028699">
    <property type="gene designation" value="PLS1"/>
</dbReference>
<dbReference type="VEuPathDB" id="FungiDB:YNL097C-B"/>
<dbReference type="HOGENOM" id="CLU_3299646_0_0_1"/>
<dbReference type="InParanoid" id="P0C271"/>
<dbReference type="BioCyc" id="YEAST:G3O-33411-MONOMER"/>
<dbReference type="BioGRID-ORCS" id="1466513">
    <property type="hits" value="1 hit in 10 CRISPR screens"/>
</dbReference>
<dbReference type="PRO" id="PR:P0C271"/>
<dbReference type="Proteomes" id="UP000002311">
    <property type="component" value="Chromosome XIV"/>
</dbReference>
<dbReference type="GO" id="GO:0005829">
    <property type="term" value="C:cytosol"/>
    <property type="evidence" value="ECO:0000314"/>
    <property type="project" value="SGD"/>
</dbReference>
<dbReference type="GO" id="GO:0005782">
    <property type="term" value="C:peroxisomal matrix"/>
    <property type="evidence" value="ECO:0007669"/>
    <property type="project" value="UniProtKB-SubCell"/>
</dbReference>
<dbReference type="GO" id="GO:1902986">
    <property type="term" value="P:regulation of lysine biosynthetic process via aminoadipic acid"/>
    <property type="evidence" value="ECO:0000315"/>
    <property type="project" value="SGD"/>
</dbReference>
<feature type="chain" id="PRO_0000268630" description="Peroxisomal LYS1 stabilizing protein 1">
    <location>
        <begin position="1"/>
        <end position="40"/>
    </location>
</feature>
<feature type="region of interest" description="Disordered" evidence="1">
    <location>
        <begin position="1"/>
        <end position="20"/>
    </location>
</feature>
<feature type="compositionally biased region" description="Polar residues" evidence="1">
    <location>
        <begin position="1"/>
        <end position="10"/>
    </location>
</feature>
<name>PELS1_YEAST</name>
<evidence type="ECO:0000256" key="1">
    <source>
        <dbReference type="SAM" id="MobiDB-lite"/>
    </source>
</evidence>
<evidence type="ECO:0000269" key="2">
    <source>
    </source>
</evidence>
<evidence type="ECO:0000303" key="3">
    <source>
    </source>
</evidence>
<gene>
    <name evidence="3" type="primary">PLS1</name>
    <name type="ordered locus">YNL097C-B</name>
    <name type="ORF">YNL097C-A</name>
</gene>
<sequence length="40" mass="4622">MTAKTKQSWNKGIWENGKQGSHQQTFLPKIWVNIYSTPTS</sequence>
<organism>
    <name type="scientific">Saccharomyces cerevisiae (strain ATCC 204508 / S288c)</name>
    <name type="common">Baker's yeast</name>
    <dbReference type="NCBI Taxonomy" id="559292"/>
    <lineage>
        <taxon>Eukaryota</taxon>
        <taxon>Fungi</taxon>
        <taxon>Dikarya</taxon>
        <taxon>Ascomycota</taxon>
        <taxon>Saccharomycotina</taxon>
        <taxon>Saccharomycetes</taxon>
        <taxon>Saccharomycetales</taxon>
        <taxon>Saccharomycetaceae</taxon>
        <taxon>Saccharomyces</taxon>
    </lineage>
</organism>
<proteinExistence type="predicted"/>
<protein>
    <recommendedName>
        <fullName evidence="3">Peroxisomal LYS1 stabilizing protein 1</fullName>
    </recommendedName>
</protein>
<reference key="1">
    <citation type="journal article" date="2005" name="Nat. Genet.">
        <title>Quantitative trait loci mapped to single-nucleotide resolution in yeast.</title>
        <authorList>
            <person name="Deutschbauer A.M."/>
            <person name="Davis R.W."/>
        </authorList>
    </citation>
    <scope>NUCLEOTIDE SEQUENCE [GENOMIC DNA]</scope>
    <source>
        <strain>SK1</strain>
    </source>
</reference>
<reference key="2">
    <citation type="journal article" date="1996" name="Yeast">
        <title>The sequence of a 21.3 kb DNA fragment from the left arm of yeast chromosome XIV reveals LEU4, MET4, POL1, RAS2, and six new open reading frames.</title>
        <authorList>
            <person name="Saiz J.E."/>
            <person name="Buitrago M.J."/>
            <person name="Soler A."/>
            <person name="del Rey F."/>
            <person name="Revuelta J.L."/>
        </authorList>
    </citation>
    <scope>NUCLEOTIDE SEQUENCE [GENOMIC DNA]</scope>
    <source>
        <strain>ATCC 96604 / S288c / FY1679</strain>
    </source>
</reference>
<reference key="3">
    <citation type="journal article" date="1997" name="Nature">
        <title>The nucleotide sequence of Saccharomyces cerevisiae chromosome XIV and its evolutionary implications.</title>
        <authorList>
            <person name="Philippsen P."/>
            <person name="Kleine K."/>
            <person name="Poehlmann R."/>
            <person name="Duesterhoeft A."/>
            <person name="Hamberg K."/>
            <person name="Hegemann J.H."/>
            <person name="Obermaier B."/>
            <person name="Urrestarazu L.A."/>
            <person name="Aert R."/>
            <person name="Albermann K."/>
            <person name="Altmann R."/>
            <person name="Andre B."/>
            <person name="Baladron V."/>
            <person name="Ballesta J.P.G."/>
            <person name="Becam A.-M."/>
            <person name="Beinhauer J.D."/>
            <person name="Boskovic J."/>
            <person name="Buitrago M.J."/>
            <person name="Bussereau F."/>
            <person name="Coster F."/>
            <person name="Crouzet M."/>
            <person name="D'Angelo M."/>
            <person name="Dal Pero F."/>
            <person name="De Antoni A."/>
            <person name="del Rey F."/>
            <person name="Doignon F."/>
            <person name="Domdey H."/>
            <person name="Dubois E."/>
            <person name="Fiedler T.A."/>
            <person name="Fleig U."/>
            <person name="Floeth M."/>
            <person name="Fritz C."/>
            <person name="Gaillardin C."/>
            <person name="Garcia-Cantalejo J.M."/>
            <person name="Glansdorff N."/>
            <person name="Goffeau A."/>
            <person name="Gueldener U."/>
            <person name="Herbert C.J."/>
            <person name="Heumann K."/>
            <person name="Heuss-Neitzel D."/>
            <person name="Hilbert H."/>
            <person name="Hinni K."/>
            <person name="Iraqui Houssaini I."/>
            <person name="Jacquet M."/>
            <person name="Jimenez A."/>
            <person name="Jonniaux J.-L."/>
            <person name="Karpfinger-Hartl L."/>
            <person name="Lanfranchi G."/>
            <person name="Lepingle A."/>
            <person name="Levesque H."/>
            <person name="Lyck R."/>
            <person name="Maftahi M."/>
            <person name="Mallet L."/>
            <person name="Maurer C.T.C."/>
            <person name="Messenguy F."/>
            <person name="Mewes H.-W."/>
            <person name="Moestl D."/>
            <person name="Nasr F."/>
            <person name="Nicaud J.-M."/>
            <person name="Niedenthal R.K."/>
            <person name="Pandolfo D."/>
            <person name="Pierard A."/>
            <person name="Piravandi E."/>
            <person name="Planta R.J."/>
            <person name="Pohl T.M."/>
            <person name="Purnelle B."/>
            <person name="Rebischung C."/>
            <person name="Remacha M.A."/>
            <person name="Revuelta J.L."/>
            <person name="Rinke M."/>
            <person name="Saiz J.E."/>
            <person name="Sartorello F."/>
            <person name="Scherens B."/>
            <person name="Sen-Gupta M."/>
            <person name="Soler-Mira A."/>
            <person name="Urbanus J.H.M."/>
            <person name="Valle G."/>
            <person name="Van Dyck L."/>
            <person name="Verhasselt P."/>
            <person name="Vierendeels F."/>
            <person name="Vissers S."/>
            <person name="Voet M."/>
            <person name="Volckaert G."/>
            <person name="Wach A."/>
            <person name="Wambutt R."/>
            <person name="Wedler H."/>
            <person name="Zollner A."/>
            <person name="Hani J."/>
        </authorList>
    </citation>
    <scope>NUCLEOTIDE SEQUENCE [LARGE SCALE GENOMIC DNA]</scope>
    <source>
        <strain>ATCC 204508 / S288c</strain>
    </source>
</reference>
<reference key="4">
    <citation type="journal article" date="2014" name="G3 (Bethesda)">
        <title>The reference genome sequence of Saccharomyces cerevisiae: Then and now.</title>
        <authorList>
            <person name="Engel S.R."/>
            <person name="Dietrich F.S."/>
            <person name="Fisk D.G."/>
            <person name="Binkley G."/>
            <person name="Balakrishnan R."/>
            <person name="Costanzo M.C."/>
            <person name="Dwight S.S."/>
            <person name="Hitz B.C."/>
            <person name="Karra K."/>
            <person name="Nash R.S."/>
            <person name="Weng S."/>
            <person name="Wong E.D."/>
            <person name="Lloyd P."/>
            <person name="Skrzypek M.S."/>
            <person name="Miyasato S.R."/>
            <person name="Simison M."/>
            <person name="Cherry J.M."/>
        </authorList>
    </citation>
    <scope>GENOME REANNOTATION</scope>
    <source>
        <strain>ATCC 204508 / S288c</strain>
    </source>
</reference>
<reference key="5">
    <citation type="journal article" date="2002" name="Nat. Biotechnol.">
        <title>An integrated approach for finding overlooked genes in yeast.</title>
        <authorList>
            <person name="Kumar A."/>
            <person name="Harrison P.M."/>
            <person name="Cheung K.-H."/>
            <person name="Lan N."/>
            <person name="Echols N."/>
            <person name="Bertone P."/>
            <person name="Miller P."/>
            <person name="Gerstein M.B."/>
            <person name="Snyder M."/>
        </authorList>
    </citation>
    <scope>NUCLEOTIDE SEQUENCE [GENOMIC DNA]</scope>
</reference>
<reference key="6">
    <citation type="journal article" date="2022" name="Cells">
        <title>Pls1 Is a Peroxisomal Matrix Protein with a Role in Regulating Lysine Biosynthesis.</title>
        <authorList>
            <person name="David Y."/>
            <person name="Castro I.G."/>
            <person name="Yifrach E."/>
            <person name="Bibi C."/>
            <person name="Katawi E."/>
            <person name="Yahav Har-Shai D."/>
            <person name="Brodsky S."/>
            <person name="Barkai N."/>
            <person name="Ravid T."/>
            <person name="Eisenstein M."/>
            <person name="Pietrokovski S."/>
            <person name="Schuldiner M."/>
            <person name="Zalckvar E."/>
        </authorList>
    </citation>
    <scope>FUNCTION</scope>
    <scope>SUBCELLULAR LOCATION</scope>
    <scope>DISRUPTION PHENOTYPE</scope>
</reference>
<comment type="function">
    <text evidence="2">Modulates the lysine biosynthesis pathway, possibly by stabilizing the lysine biosynthesis LYS1 protein in lysine-deplete conditions.</text>
</comment>
<comment type="subcellular location">
    <subcellularLocation>
        <location evidence="2">Cytoplasm</location>
        <location evidence="2">Cytosol</location>
    </subcellularLocation>
    <subcellularLocation>
        <location evidence="2">Peroxisome matrix</location>
    </subcellularLocation>
    <text evidence="2">Localizes to peroxisomes in lysine-deplete conditions in a LYS1- and PEX5-dependent manner.</text>
</comment>
<comment type="disruption phenotype">
    <text evidence="2">Decreases the level of LYS1 protein.</text>
</comment>
<keyword id="KW-0963">Cytoplasm</keyword>
<keyword id="KW-0576">Peroxisome</keyword>
<keyword id="KW-1185">Reference proteome</keyword>
<accession>P0C271</accession>
<accession>D6W182</accession>
<accession>Q8TGS3</accession>